<accession>Q5XDG5</accession>
<gene>
    <name evidence="1" type="primary">ybeY</name>
    <name type="ordered locus">M6_Spy0413</name>
</gene>
<name>YBEY_STRP6</name>
<protein>
    <recommendedName>
        <fullName evidence="1">Endoribonuclease YbeY</fullName>
        <ecNumber evidence="1">3.1.-.-</ecNumber>
    </recommendedName>
</protein>
<comment type="function">
    <text evidence="1">Single strand-specific metallo-endoribonuclease involved in late-stage 70S ribosome quality control and in maturation of the 3' terminus of the 16S rRNA.</text>
</comment>
<comment type="cofactor">
    <cofactor evidence="1">
        <name>Zn(2+)</name>
        <dbReference type="ChEBI" id="CHEBI:29105"/>
    </cofactor>
    <text evidence="1">Binds 1 zinc ion.</text>
</comment>
<comment type="subcellular location">
    <subcellularLocation>
        <location evidence="1">Cytoplasm</location>
    </subcellularLocation>
</comment>
<comment type="similarity">
    <text evidence="1">Belongs to the endoribonuclease YbeY family.</text>
</comment>
<comment type="sequence caution" evidence="2">
    <conflict type="erroneous initiation">
        <sequence resource="EMBL-CDS" id="AAT86548"/>
    </conflict>
</comment>
<feature type="chain" id="PRO_0000102544" description="Endoribonuclease YbeY">
    <location>
        <begin position="1"/>
        <end position="165"/>
    </location>
</feature>
<feature type="binding site" evidence="1">
    <location>
        <position position="130"/>
    </location>
    <ligand>
        <name>Zn(2+)</name>
        <dbReference type="ChEBI" id="CHEBI:29105"/>
        <note>catalytic</note>
    </ligand>
</feature>
<feature type="binding site" evidence="1">
    <location>
        <position position="134"/>
    </location>
    <ligand>
        <name>Zn(2+)</name>
        <dbReference type="ChEBI" id="CHEBI:29105"/>
        <note>catalytic</note>
    </ligand>
</feature>
<feature type="binding site" evidence="1">
    <location>
        <position position="140"/>
    </location>
    <ligand>
        <name>Zn(2+)</name>
        <dbReference type="ChEBI" id="CHEBI:29105"/>
        <note>catalytic</note>
    </ligand>
</feature>
<organism>
    <name type="scientific">Streptococcus pyogenes serotype M6 (strain ATCC BAA-946 / MGAS10394)</name>
    <dbReference type="NCBI Taxonomy" id="286636"/>
    <lineage>
        <taxon>Bacteria</taxon>
        <taxon>Bacillati</taxon>
        <taxon>Bacillota</taxon>
        <taxon>Bacilli</taxon>
        <taxon>Lactobacillales</taxon>
        <taxon>Streptococcaceae</taxon>
        <taxon>Streptococcus</taxon>
    </lineage>
</organism>
<evidence type="ECO:0000255" key="1">
    <source>
        <dbReference type="HAMAP-Rule" id="MF_00009"/>
    </source>
</evidence>
<evidence type="ECO:0000305" key="2"/>
<dbReference type="EC" id="3.1.-.-" evidence="1"/>
<dbReference type="EMBL" id="CP000003">
    <property type="protein sequence ID" value="AAT86548.1"/>
    <property type="status" value="ALT_INIT"/>
    <property type="molecule type" value="Genomic_DNA"/>
</dbReference>
<dbReference type="RefSeq" id="WP_002985748.1">
    <property type="nucleotide sequence ID" value="NC_006086.1"/>
</dbReference>
<dbReference type="SMR" id="Q5XDG5"/>
<dbReference type="GeneID" id="69901291"/>
<dbReference type="KEGG" id="spa:M6_Spy0413"/>
<dbReference type="HOGENOM" id="CLU_106710_3_0_9"/>
<dbReference type="Proteomes" id="UP000001167">
    <property type="component" value="Chromosome"/>
</dbReference>
<dbReference type="GO" id="GO:0005737">
    <property type="term" value="C:cytoplasm"/>
    <property type="evidence" value="ECO:0007669"/>
    <property type="project" value="UniProtKB-SubCell"/>
</dbReference>
<dbReference type="GO" id="GO:0004222">
    <property type="term" value="F:metalloendopeptidase activity"/>
    <property type="evidence" value="ECO:0007669"/>
    <property type="project" value="InterPro"/>
</dbReference>
<dbReference type="GO" id="GO:0004521">
    <property type="term" value="F:RNA endonuclease activity"/>
    <property type="evidence" value="ECO:0007669"/>
    <property type="project" value="UniProtKB-UniRule"/>
</dbReference>
<dbReference type="GO" id="GO:0008270">
    <property type="term" value="F:zinc ion binding"/>
    <property type="evidence" value="ECO:0007669"/>
    <property type="project" value="UniProtKB-UniRule"/>
</dbReference>
<dbReference type="GO" id="GO:0006364">
    <property type="term" value="P:rRNA processing"/>
    <property type="evidence" value="ECO:0007669"/>
    <property type="project" value="UniProtKB-UniRule"/>
</dbReference>
<dbReference type="Gene3D" id="3.40.390.30">
    <property type="entry name" value="Metalloproteases ('zincins'), catalytic domain"/>
    <property type="match status" value="1"/>
</dbReference>
<dbReference type="HAMAP" id="MF_00009">
    <property type="entry name" value="Endoribonucl_YbeY"/>
    <property type="match status" value="1"/>
</dbReference>
<dbReference type="InterPro" id="IPR023091">
    <property type="entry name" value="MetalPrtase_cat_dom_sf_prd"/>
</dbReference>
<dbReference type="InterPro" id="IPR002036">
    <property type="entry name" value="YbeY"/>
</dbReference>
<dbReference type="InterPro" id="IPR020549">
    <property type="entry name" value="YbeY_CS"/>
</dbReference>
<dbReference type="NCBIfam" id="TIGR00043">
    <property type="entry name" value="rRNA maturation RNase YbeY"/>
    <property type="match status" value="1"/>
</dbReference>
<dbReference type="PANTHER" id="PTHR46986">
    <property type="entry name" value="ENDORIBONUCLEASE YBEY, CHLOROPLASTIC"/>
    <property type="match status" value="1"/>
</dbReference>
<dbReference type="PANTHER" id="PTHR46986:SF1">
    <property type="entry name" value="ENDORIBONUCLEASE YBEY, CHLOROPLASTIC"/>
    <property type="match status" value="1"/>
</dbReference>
<dbReference type="Pfam" id="PF02130">
    <property type="entry name" value="YbeY"/>
    <property type="match status" value="1"/>
</dbReference>
<dbReference type="SUPFAM" id="SSF55486">
    <property type="entry name" value="Metalloproteases ('zincins'), catalytic domain"/>
    <property type="match status" value="1"/>
</dbReference>
<dbReference type="PROSITE" id="PS01306">
    <property type="entry name" value="UPF0054"/>
    <property type="match status" value="1"/>
</dbReference>
<proteinExistence type="inferred from homology"/>
<sequence length="165" mass="19197">MYIEMIDETGQVSQEIMEQTLDLLNFAAQKTGKEEKEMSVTFVTNERSHELNLEYRDTDRPTDVISLEYKPETPILFSQEDLAADPSLAEMMAEFDAYIGELFISIDKAREQSQEYGHSFEREMGFLAVHGFLHINGYDHYTLEEEKEMFTLQEEILTAYGLTRQ</sequence>
<keyword id="KW-0963">Cytoplasm</keyword>
<keyword id="KW-0255">Endonuclease</keyword>
<keyword id="KW-0378">Hydrolase</keyword>
<keyword id="KW-0479">Metal-binding</keyword>
<keyword id="KW-0540">Nuclease</keyword>
<keyword id="KW-0690">Ribosome biogenesis</keyword>
<keyword id="KW-0698">rRNA processing</keyword>
<keyword id="KW-0862">Zinc</keyword>
<reference key="1">
    <citation type="journal article" date="2004" name="J. Infect. Dis.">
        <title>Progress toward characterization of the group A Streptococcus metagenome: complete genome sequence of a macrolide-resistant serotype M6 strain.</title>
        <authorList>
            <person name="Banks D.J."/>
            <person name="Porcella S.F."/>
            <person name="Barbian K.D."/>
            <person name="Beres S.B."/>
            <person name="Philips L.E."/>
            <person name="Voyich J.M."/>
            <person name="DeLeo F.R."/>
            <person name="Martin J.M."/>
            <person name="Somerville G.A."/>
            <person name="Musser J.M."/>
        </authorList>
    </citation>
    <scope>NUCLEOTIDE SEQUENCE [LARGE SCALE GENOMIC DNA]</scope>
    <source>
        <strain>ATCC BAA-946 / MGAS10394</strain>
    </source>
</reference>